<feature type="chain" id="PRO_1000193138" description="Phosphate acyltransferase">
    <location>
        <begin position="1"/>
        <end position="340"/>
    </location>
</feature>
<feature type="region of interest" description="Disordered" evidence="2">
    <location>
        <begin position="285"/>
        <end position="340"/>
    </location>
</feature>
<feature type="compositionally biased region" description="Basic residues" evidence="2">
    <location>
        <begin position="300"/>
        <end position="325"/>
    </location>
</feature>
<comment type="function">
    <text evidence="1">Catalyzes the reversible formation of acyl-phosphate (acyl-PO(4)) from acyl-[acyl-carrier-protein] (acyl-ACP). This enzyme utilizes acyl-ACP as fatty acyl donor, but not acyl-CoA.</text>
</comment>
<comment type="catalytic activity">
    <reaction evidence="1">
        <text>a fatty acyl-[ACP] + phosphate = an acyl phosphate + holo-[ACP]</text>
        <dbReference type="Rhea" id="RHEA:42292"/>
        <dbReference type="Rhea" id="RHEA-COMP:9685"/>
        <dbReference type="Rhea" id="RHEA-COMP:14125"/>
        <dbReference type="ChEBI" id="CHEBI:43474"/>
        <dbReference type="ChEBI" id="CHEBI:59918"/>
        <dbReference type="ChEBI" id="CHEBI:64479"/>
        <dbReference type="ChEBI" id="CHEBI:138651"/>
        <dbReference type="EC" id="2.3.1.274"/>
    </reaction>
</comment>
<comment type="pathway">
    <text evidence="1">Lipid metabolism; phospholipid metabolism.</text>
</comment>
<comment type="subunit">
    <text evidence="1">Homodimer. Probably interacts with PlsY.</text>
</comment>
<comment type="subcellular location">
    <subcellularLocation>
        <location evidence="1">Cytoplasm</location>
    </subcellularLocation>
    <text evidence="1">Associated with the membrane possibly through PlsY.</text>
</comment>
<comment type="similarity">
    <text evidence="1">Belongs to the PlsX family.</text>
</comment>
<name>PLSX_LARHH</name>
<proteinExistence type="inferred from homology"/>
<gene>
    <name evidence="1" type="primary">plsX</name>
    <name type="ordered locus">LHK_00573</name>
</gene>
<accession>C1DCE9</accession>
<reference key="1">
    <citation type="journal article" date="2009" name="PLoS Genet.">
        <title>The complete genome and proteome of Laribacter hongkongensis reveal potential mechanisms for adaptations to different temperatures and habitats.</title>
        <authorList>
            <person name="Woo P.C.Y."/>
            <person name="Lau S.K.P."/>
            <person name="Tse H."/>
            <person name="Teng J.L.L."/>
            <person name="Curreem S.O."/>
            <person name="Tsang A.K.L."/>
            <person name="Fan R.Y.Y."/>
            <person name="Wong G.K.M."/>
            <person name="Huang Y."/>
            <person name="Loman N.J."/>
            <person name="Snyder L.A.S."/>
            <person name="Cai J.J."/>
            <person name="Huang J.-D."/>
            <person name="Mak W."/>
            <person name="Pallen M.J."/>
            <person name="Lok S."/>
            <person name="Yuen K.-Y."/>
        </authorList>
    </citation>
    <scope>NUCLEOTIDE SEQUENCE [LARGE SCALE GENOMIC DNA]</scope>
    <source>
        <strain>HLHK9</strain>
    </source>
</reference>
<protein>
    <recommendedName>
        <fullName evidence="1">Phosphate acyltransferase</fullName>
        <ecNumber evidence="1">2.3.1.274</ecNumber>
    </recommendedName>
    <alternativeName>
        <fullName evidence="1">Acyl-ACP phosphotransacylase</fullName>
    </alternativeName>
    <alternativeName>
        <fullName evidence="1">Acyl-[acyl-carrier-protein]--phosphate acyltransferase</fullName>
    </alternativeName>
    <alternativeName>
        <fullName evidence="1">Phosphate-acyl-ACP acyltransferase</fullName>
    </alternativeName>
</protein>
<evidence type="ECO:0000255" key="1">
    <source>
        <dbReference type="HAMAP-Rule" id="MF_00019"/>
    </source>
</evidence>
<evidence type="ECO:0000256" key="2">
    <source>
        <dbReference type="SAM" id="MobiDB-lite"/>
    </source>
</evidence>
<dbReference type="EC" id="2.3.1.274" evidence="1"/>
<dbReference type="EMBL" id="CP001154">
    <property type="protein sequence ID" value="ACO73566.1"/>
    <property type="molecule type" value="Genomic_DNA"/>
</dbReference>
<dbReference type="SMR" id="C1DCE9"/>
<dbReference type="STRING" id="557598.LHK_00573"/>
<dbReference type="KEGG" id="lhk:LHK_00573"/>
<dbReference type="eggNOG" id="COG0416">
    <property type="taxonomic scope" value="Bacteria"/>
</dbReference>
<dbReference type="HOGENOM" id="CLU_039379_1_0_4"/>
<dbReference type="UniPathway" id="UPA00085"/>
<dbReference type="Proteomes" id="UP000002010">
    <property type="component" value="Chromosome"/>
</dbReference>
<dbReference type="GO" id="GO:0005737">
    <property type="term" value="C:cytoplasm"/>
    <property type="evidence" value="ECO:0007669"/>
    <property type="project" value="UniProtKB-SubCell"/>
</dbReference>
<dbReference type="GO" id="GO:0043811">
    <property type="term" value="F:phosphate:acyl-[acyl carrier protein] acyltransferase activity"/>
    <property type="evidence" value="ECO:0007669"/>
    <property type="project" value="UniProtKB-UniRule"/>
</dbReference>
<dbReference type="GO" id="GO:0006633">
    <property type="term" value="P:fatty acid biosynthetic process"/>
    <property type="evidence" value="ECO:0007669"/>
    <property type="project" value="UniProtKB-UniRule"/>
</dbReference>
<dbReference type="GO" id="GO:0008654">
    <property type="term" value="P:phospholipid biosynthetic process"/>
    <property type="evidence" value="ECO:0007669"/>
    <property type="project" value="UniProtKB-KW"/>
</dbReference>
<dbReference type="Gene3D" id="3.40.718.10">
    <property type="entry name" value="Isopropylmalate Dehydrogenase"/>
    <property type="match status" value="1"/>
</dbReference>
<dbReference type="HAMAP" id="MF_00019">
    <property type="entry name" value="PlsX"/>
    <property type="match status" value="1"/>
</dbReference>
<dbReference type="InterPro" id="IPR003664">
    <property type="entry name" value="FA_synthesis"/>
</dbReference>
<dbReference type="InterPro" id="IPR012281">
    <property type="entry name" value="Phospholipid_synth_PlsX-like"/>
</dbReference>
<dbReference type="NCBIfam" id="TIGR00182">
    <property type="entry name" value="plsX"/>
    <property type="match status" value="1"/>
</dbReference>
<dbReference type="PANTHER" id="PTHR30100">
    <property type="entry name" value="FATTY ACID/PHOSPHOLIPID SYNTHESIS PROTEIN PLSX"/>
    <property type="match status" value="1"/>
</dbReference>
<dbReference type="PANTHER" id="PTHR30100:SF1">
    <property type="entry name" value="PHOSPHATE ACYLTRANSFERASE"/>
    <property type="match status" value="1"/>
</dbReference>
<dbReference type="Pfam" id="PF02504">
    <property type="entry name" value="FA_synthesis"/>
    <property type="match status" value="1"/>
</dbReference>
<dbReference type="PIRSF" id="PIRSF002465">
    <property type="entry name" value="Phsphlp_syn_PlsX"/>
    <property type="match status" value="1"/>
</dbReference>
<dbReference type="SUPFAM" id="SSF53659">
    <property type="entry name" value="Isocitrate/Isopropylmalate dehydrogenase-like"/>
    <property type="match status" value="1"/>
</dbReference>
<sequence>MTLTVAVDAMGGDVGVGVTVPAAVDFLDRHPDVRLILVGQPDAIEDELTRLARPRSGRLTVHAASQVVAMDDSPQSALKNKKDSSMRVAINLVKEGQAQAAVSAGNTGALMATARFVLKTIPGIDRPAIAKLLPTMKGESCVLDLGANVDCTPEQLLQFGIMGATLIEGVTGRNNPTVGLLNIGSEEIKGNDTVKQAAELLRNSSLNFYGNVEGNDIYLGTVDVIVTDGFTGNVALKTSEGLAHMVGALLKQEFGRNLFTRLSALAALPVLKHFKKRLDSPALQWRQSGRPARHRGQEPRRHRQPRFWLCHRRGRRRSPRQRNRTHPGTGQPPAGCAGAR</sequence>
<keyword id="KW-0963">Cytoplasm</keyword>
<keyword id="KW-0444">Lipid biosynthesis</keyword>
<keyword id="KW-0443">Lipid metabolism</keyword>
<keyword id="KW-0594">Phospholipid biosynthesis</keyword>
<keyword id="KW-1208">Phospholipid metabolism</keyword>
<keyword id="KW-1185">Reference proteome</keyword>
<keyword id="KW-0808">Transferase</keyword>
<organism>
    <name type="scientific">Laribacter hongkongensis (strain HLHK9)</name>
    <dbReference type="NCBI Taxonomy" id="557598"/>
    <lineage>
        <taxon>Bacteria</taxon>
        <taxon>Pseudomonadati</taxon>
        <taxon>Pseudomonadota</taxon>
        <taxon>Betaproteobacteria</taxon>
        <taxon>Neisseriales</taxon>
        <taxon>Aquaspirillaceae</taxon>
        <taxon>Laribacter</taxon>
    </lineage>
</organism>